<proteinExistence type="evidence at protein level"/>
<keyword id="KW-0027">Amidation</keyword>
<keyword id="KW-0165">Cleavage on pair of basic residues</keyword>
<keyword id="KW-0903">Direct protein sequencing</keyword>
<keyword id="KW-0527">Neuropeptide</keyword>
<keyword id="KW-0873">Pyrrolidone carboxylic acid</keyword>
<keyword id="KW-1185">Reference proteome</keyword>
<keyword id="KW-0964">Secreted</keyword>
<keyword id="KW-0732">Signal</keyword>
<reference evidence="4" key="1">
    <citation type="submission" date="2010-11" db="EMBL/GenBank/DDBJ databases">
        <authorList>
            <consortium name="Honey bee genome project"/>
            <person name="Zhang L."/>
            <person name="Deng J."/>
            <person name="Wu Y.-Q."/>
            <person name="Kovar C."/>
            <person name="Aqrawi P."/>
            <person name="Bandaranaike D."/>
            <person name="Blankenburg K."/>
            <person name="Chen D."/>
            <person name="Denson S."/>
            <person name="Dinh H."/>
            <person name="Firestine M."/>
            <person name="Gross S."/>
            <person name="Han Y."/>
            <person name="Hernandez B."/>
            <person name="Holder M."/>
            <person name="Jackson L."/>
            <person name="Javaid M."/>
            <person name="Jing C."/>
            <person name="Jones J."/>
            <person name="Joshi V."/>
            <person name="Kamau G."/>
            <person name="Korchina V."/>
            <person name="Lee S."/>
            <person name="Lorensuhewa L."/>
            <person name="Mata R."/>
            <person name="Mathew T."/>
            <person name="Mims S."/>
            <person name="Ngo R."/>
            <person name="Nguyen L."/>
            <person name="Okwuonu G."/>
            <person name="Ongeri F."/>
            <person name="Osuji N."/>
            <person name="Pham C."/>
            <person name="Puazo M."/>
            <person name="Qu C."/>
            <person name="Quiroz J."/>
            <person name="Raj R."/>
            <person name="Rio Deiros D."/>
            <person name="Santibanez J."/>
            <person name="Scheel M."/>
            <person name="Scherer S."/>
            <person name="Vee V."/>
            <person name="Wang M."/>
            <person name="Xin Y."/>
            <person name="Richards S."/>
            <person name="Reid J.G."/>
            <person name="Newsham I."/>
            <person name="Worley K.C."/>
            <person name="Muzny D.M."/>
            <person name="Gibbs R."/>
        </authorList>
    </citation>
    <scope>NUCLEOTIDE SEQUENCE [LARGE SCALE GENOMIC DNA]</scope>
    <source>
        <strain>DH4</strain>
    </source>
</reference>
<reference evidence="4" key="2">
    <citation type="journal article" date="2006" name="Science">
        <title>From the genome to the proteome: uncovering peptides in the Apis brain.</title>
        <authorList>
            <person name="Hummon A.B."/>
            <person name="Richmond T.A."/>
            <person name="Verleyen P."/>
            <person name="Baggerman G."/>
            <person name="Huybrechts J."/>
            <person name="Ewing M.A."/>
            <person name="Vierstraete E."/>
            <person name="Rodriguez-Zas S.L."/>
            <person name="Schoofs L."/>
            <person name="Robinson G.E."/>
            <person name="Sweedler J.V."/>
        </authorList>
    </citation>
    <scope>PROTEIN SEQUENCE OF 73-82</scope>
    <scope>MASS SPECTROMETRY</scope>
    <scope>PYROGLUTAMATE FORMATION AT GLN-73</scope>
    <scope>AMIDATION AT PHE-82</scope>
    <source>
        <tissue evidence="3">Brain</tissue>
    </source>
</reference>
<sequence>MAIFCNNVLAALPTQCNPGFLDDLPPRIRKVCVALSRIYELGSEMESYIGDKENHITGFHESIPLLDSGVKRQDVDHVFLRFGRRR</sequence>
<name>NEMS_APIME</name>
<feature type="signal peptide" evidence="2">
    <location>
        <begin position="1"/>
        <end position="18"/>
    </location>
</feature>
<feature type="propeptide" id="PRO_0000341449" evidence="2 3">
    <location>
        <begin position="19"/>
        <end position="70"/>
    </location>
</feature>
<feature type="peptide" id="PRO_0000341450" description="Myosuppressin" evidence="3">
    <location>
        <begin position="73"/>
        <end position="82"/>
    </location>
</feature>
<feature type="modified residue" description="Pyrrolidone carboxylic acid" evidence="3">
    <location>
        <position position="73"/>
    </location>
</feature>
<feature type="modified residue" description="Phenylalanine amide" evidence="3">
    <location>
        <position position="82"/>
    </location>
</feature>
<organism>
    <name type="scientific">Apis mellifera</name>
    <name type="common">Honeybee</name>
    <dbReference type="NCBI Taxonomy" id="7460"/>
    <lineage>
        <taxon>Eukaryota</taxon>
        <taxon>Metazoa</taxon>
        <taxon>Ecdysozoa</taxon>
        <taxon>Arthropoda</taxon>
        <taxon>Hexapoda</taxon>
        <taxon>Insecta</taxon>
        <taxon>Pterygota</taxon>
        <taxon>Neoptera</taxon>
        <taxon>Endopterygota</taxon>
        <taxon>Hymenoptera</taxon>
        <taxon>Apocrita</taxon>
        <taxon>Aculeata</taxon>
        <taxon>Apoidea</taxon>
        <taxon>Anthophila</taxon>
        <taxon>Apidae</taxon>
        <taxon>Apis</taxon>
    </lineage>
</organism>
<accession>P85527</accession>
<evidence type="ECO:0000250" key="1">
    <source>
        <dbReference type="UniProtKB" id="P61849"/>
    </source>
</evidence>
<evidence type="ECO:0000255" key="2"/>
<evidence type="ECO:0000269" key="3">
    <source>
    </source>
</evidence>
<evidence type="ECO:0000305" key="4"/>
<dbReference type="EMBL" id="AADG06001837">
    <property type="status" value="NOT_ANNOTATED_CDS"/>
    <property type="molecule type" value="Genomic_DNA"/>
</dbReference>
<dbReference type="FunCoup" id="P85527">
    <property type="interactions" value="43"/>
</dbReference>
<dbReference type="PaxDb" id="7460-GB44942-PA"/>
<dbReference type="EnsemblMetazoa" id="XM_006566550">
    <property type="protein sequence ID" value="XP_006566613"/>
    <property type="gene ID" value="LOC726861"/>
</dbReference>
<dbReference type="eggNOG" id="ENOG502SDA3">
    <property type="taxonomic scope" value="Eukaryota"/>
</dbReference>
<dbReference type="HOGENOM" id="CLU_177213_0_0_1"/>
<dbReference type="InParanoid" id="P85527"/>
<dbReference type="OMA" id="HIKKVCM"/>
<dbReference type="PhylomeDB" id="P85527"/>
<dbReference type="Proteomes" id="UP000005203">
    <property type="component" value="Unplaced"/>
</dbReference>
<dbReference type="GO" id="GO:0005576">
    <property type="term" value="C:extracellular region"/>
    <property type="evidence" value="ECO:0007669"/>
    <property type="project" value="UniProtKB-SubCell"/>
</dbReference>
<dbReference type="GO" id="GO:0007218">
    <property type="term" value="P:neuropeptide signaling pathway"/>
    <property type="evidence" value="ECO:0007669"/>
    <property type="project" value="UniProtKB-KW"/>
</dbReference>
<protein>
    <recommendedName>
        <fullName>Myosuppressin</fullName>
    </recommendedName>
</protein>
<comment type="function">
    <text evidence="1">Myoinhibiting neuropeptide.</text>
</comment>
<comment type="subcellular location">
    <subcellularLocation>
        <location evidence="1">Secreted</location>
    </subcellularLocation>
</comment>
<comment type="mass spectrometry"/>
<comment type="similarity">
    <text evidence="4">Belongs to the myosuppressin family.</text>
</comment>